<comment type="function">
    <text evidence="1 8">G protein-coupled receptor that is activated by the chemokine CCL5/RANTES. Probably coupled to heterotrimeric Gq proteins, it stimulates inositol trisphosphate production and calcium mobilization upon activation. Together with CCL5/RANTES, may play a role in neuron survival through activation of a downstream signaling pathway involving the PI3, Akt and MAP kinases. CCL5/RANTES may also regulate insulin secretion by pancreatic islet cells through activation of this receptor.</text>
</comment>
<comment type="subcellular location">
    <subcellularLocation>
        <location>Cell membrane</location>
        <topology evidence="9">Multi-pass membrane protein</topology>
    </subcellularLocation>
</comment>
<comment type="tissue specificity">
    <text evidence="5 6 7">Expressed at high levels in brain and spinal cord and at detectable levels in retinal pigment epithelium. In situ hybridization of adult eye sections localized transcripts only to the perivascular cells, surrounding retinal arterioles, in the ganglion cell/nerve fiber layer. Also expressed by islet cells (at protein level).</text>
</comment>
<comment type="similarity">
    <text evidence="3">Belongs to the G-protein coupled receptor 1 family.</text>
</comment>
<evidence type="ECO:0000250" key="1">
    <source>
        <dbReference type="UniProtKB" id="Q6X632"/>
    </source>
</evidence>
<evidence type="ECO:0000255" key="2"/>
<evidence type="ECO:0000255" key="3">
    <source>
        <dbReference type="PROSITE-ProRule" id="PRU00521"/>
    </source>
</evidence>
<evidence type="ECO:0000256" key="4">
    <source>
        <dbReference type="SAM" id="MobiDB-lite"/>
    </source>
</evidence>
<evidence type="ECO:0000269" key="5">
    <source>
    </source>
</evidence>
<evidence type="ECO:0000269" key="6">
    <source>
    </source>
</evidence>
<evidence type="ECO:0000269" key="7">
    <source>
    </source>
</evidence>
<evidence type="ECO:0000303" key="8">
    <source>
    </source>
</evidence>
<evidence type="ECO:0000305" key="9"/>
<name>GPR75_HUMAN</name>
<accession>O95800</accession>
<accession>B2RC02</accession>
<accession>Q6NWR2</accession>
<organism>
    <name type="scientific">Homo sapiens</name>
    <name type="common">Human</name>
    <dbReference type="NCBI Taxonomy" id="9606"/>
    <lineage>
        <taxon>Eukaryota</taxon>
        <taxon>Metazoa</taxon>
        <taxon>Chordata</taxon>
        <taxon>Craniata</taxon>
        <taxon>Vertebrata</taxon>
        <taxon>Euteleostomi</taxon>
        <taxon>Mammalia</taxon>
        <taxon>Eutheria</taxon>
        <taxon>Euarchontoglires</taxon>
        <taxon>Primates</taxon>
        <taxon>Haplorrhini</taxon>
        <taxon>Catarrhini</taxon>
        <taxon>Hominidae</taxon>
        <taxon>Homo</taxon>
    </lineage>
</organism>
<protein>
    <recommendedName>
        <fullName>Probable G-protein coupled receptor 75</fullName>
    </recommendedName>
</protein>
<reference key="1">
    <citation type="journal article" date="1999" name="Biochem. Biophys. Res. Commun.">
        <title>Cloning and characterization of a novel orphan G-protein-coupled receptor localized to human chromosome 2p16.</title>
        <authorList>
            <person name="Tarttelin E.E."/>
            <person name="Kirschner L.S."/>
            <person name="Bellingham J."/>
            <person name="Baffi J."/>
            <person name="Taymans S.E."/>
            <person name="Gregory-Evans K."/>
            <person name="Csaky K."/>
            <person name="Stratakis C.A."/>
            <person name="Gregory-Evans C.Y."/>
        </authorList>
    </citation>
    <scope>NUCLEOTIDE SEQUENCE [GENOMIC DNA / MRNA]</scope>
    <scope>TISSUE SPECIFICITY</scope>
    <source>
        <tissue>Retina</tissue>
    </source>
</reference>
<reference key="2">
    <citation type="journal article" date="2004" name="Nat. Genet.">
        <title>Complete sequencing and characterization of 21,243 full-length human cDNAs.</title>
        <authorList>
            <person name="Ota T."/>
            <person name="Suzuki Y."/>
            <person name="Nishikawa T."/>
            <person name="Otsuki T."/>
            <person name="Sugiyama T."/>
            <person name="Irie R."/>
            <person name="Wakamatsu A."/>
            <person name="Hayashi K."/>
            <person name="Sato H."/>
            <person name="Nagai K."/>
            <person name="Kimura K."/>
            <person name="Makita H."/>
            <person name="Sekine M."/>
            <person name="Obayashi M."/>
            <person name="Nishi T."/>
            <person name="Shibahara T."/>
            <person name="Tanaka T."/>
            <person name="Ishii S."/>
            <person name="Yamamoto J."/>
            <person name="Saito K."/>
            <person name="Kawai Y."/>
            <person name="Isono Y."/>
            <person name="Nakamura Y."/>
            <person name="Nagahari K."/>
            <person name="Murakami K."/>
            <person name="Yasuda T."/>
            <person name="Iwayanagi T."/>
            <person name="Wagatsuma M."/>
            <person name="Shiratori A."/>
            <person name="Sudo H."/>
            <person name="Hosoiri T."/>
            <person name="Kaku Y."/>
            <person name="Kodaira H."/>
            <person name="Kondo H."/>
            <person name="Sugawara M."/>
            <person name="Takahashi M."/>
            <person name="Kanda K."/>
            <person name="Yokoi T."/>
            <person name="Furuya T."/>
            <person name="Kikkawa E."/>
            <person name="Omura Y."/>
            <person name="Abe K."/>
            <person name="Kamihara K."/>
            <person name="Katsuta N."/>
            <person name="Sato K."/>
            <person name="Tanikawa M."/>
            <person name="Yamazaki M."/>
            <person name="Ninomiya K."/>
            <person name="Ishibashi T."/>
            <person name="Yamashita H."/>
            <person name="Murakawa K."/>
            <person name="Fujimori K."/>
            <person name="Tanai H."/>
            <person name="Kimata M."/>
            <person name="Watanabe M."/>
            <person name="Hiraoka S."/>
            <person name="Chiba Y."/>
            <person name="Ishida S."/>
            <person name="Ono Y."/>
            <person name="Takiguchi S."/>
            <person name="Watanabe S."/>
            <person name="Yosida M."/>
            <person name="Hotuta T."/>
            <person name="Kusano J."/>
            <person name="Kanehori K."/>
            <person name="Takahashi-Fujii A."/>
            <person name="Hara H."/>
            <person name="Tanase T.-O."/>
            <person name="Nomura Y."/>
            <person name="Togiya S."/>
            <person name="Komai F."/>
            <person name="Hara R."/>
            <person name="Takeuchi K."/>
            <person name="Arita M."/>
            <person name="Imose N."/>
            <person name="Musashino K."/>
            <person name="Yuuki H."/>
            <person name="Oshima A."/>
            <person name="Sasaki N."/>
            <person name="Aotsuka S."/>
            <person name="Yoshikawa Y."/>
            <person name="Matsunawa H."/>
            <person name="Ichihara T."/>
            <person name="Shiohata N."/>
            <person name="Sano S."/>
            <person name="Moriya S."/>
            <person name="Momiyama H."/>
            <person name="Satoh N."/>
            <person name="Takami S."/>
            <person name="Terashima Y."/>
            <person name="Suzuki O."/>
            <person name="Nakagawa S."/>
            <person name="Senoh A."/>
            <person name="Mizoguchi H."/>
            <person name="Goto Y."/>
            <person name="Shimizu F."/>
            <person name="Wakebe H."/>
            <person name="Hishigaki H."/>
            <person name="Watanabe T."/>
            <person name="Sugiyama A."/>
            <person name="Takemoto M."/>
            <person name="Kawakami B."/>
            <person name="Yamazaki M."/>
            <person name="Watanabe K."/>
            <person name="Kumagai A."/>
            <person name="Itakura S."/>
            <person name="Fukuzumi Y."/>
            <person name="Fujimori Y."/>
            <person name="Komiyama M."/>
            <person name="Tashiro H."/>
            <person name="Tanigami A."/>
            <person name="Fujiwara T."/>
            <person name="Ono T."/>
            <person name="Yamada K."/>
            <person name="Fujii Y."/>
            <person name="Ozaki K."/>
            <person name="Hirao M."/>
            <person name="Ohmori Y."/>
            <person name="Kawabata A."/>
            <person name="Hikiji T."/>
            <person name="Kobatake N."/>
            <person name="Inagaki H."/>
            <person name="Ikema Y."/>
            <person name="Okamoto S."/>
            <person name="Okitani R."/>
            <person name="Kawakami T."/>
            <person name="Noguchi S."/>
            <person name="Itoh T."/>
            <person name="Shigeta K."/>
            <person name="Senba T."/>
            <person name="Matsumura K."/>
            <person name="Nakajima Y."/>
            <person name="Mizuno T."/>
            <person name="Morinaga M."/>
            <person name="Sasaki M."/>
            <person name="Togashi T."/>
            <person name="Oyama M."/>
            <person name="Hata H."/>
            <person name="Watanabe M."/>
            <person name="Komatsu T."/>
            <person name="Mizushima-Sugano J."/>
            <person name="Satoh T."/>
            <person name="Shirai Y."/>
            <person name="Takahashi Y."/>
            <person name="Nakagawa K."/>
            <person name="Okumura K."/>
            <person name="Nagase T."/>
            <person name="Nomura N."/>
            <person name="Kikuchi H."/>
            <person name="Masuho Y."/>
            <person name="Yamashita R."/>
            <person name="Nakai K."/>
            <person name="Yada T."/>
            <person name="Nakamura Y."/>
            <person name="Ohara O."/>
            <person name="Isogai T."/>
            <person name="Sugano S."/>
        </authorList>
    </citation>
    <scope>NUCLEOTIDE SEQUENCE [LARGE SCALE MRNA]</scope>
    <source>
        <tissue>Brain</tissue>
    </source>
</reference>
<reference key="3">
    <citation type="journal article" date="2005" name="Nature">
        <title>Generation and annotation of the DNA sequences of human chromosomes 2 and 4.</title>
        <authorList>
            <person name="Hillier L.W."/>
            <person name="Graves T.A."/>
            <person name="Fulton R.S."/>
            <person name="Fulton L.A."/>
            <person name="Pepin K.H."/>
            <person name="Minx P."/>
            <person name="Wagner-McPherson C."/>
            <person name="Layman D."/>
            <person name="Wylie K."/>
            <person name="Sekhon M."/>
            <person name="Becker M.C."/>
            <person name="Fewell G.A."/>
            <person name="Delehaunty K.D."/>
            <person name="Miner T.L."/>
            <person name="Nash W.E."/>
            <person name="Kremitzki C."/>
            <person name="Oddy L."/>
            <person name="Du H."/>
            <person name="Sun H."/>
            <person name="Bradshaw-Cordum H."/>
            <person name="Ali J."/>
            <person name="Carter J."/>
            <person name="Cordes M."/>
            <person name="Harris A."/>
            <person name="Isak A."/>
            <person name="van Brunt A."/>
            <person name="Nguyen C."/>
            <person name="Du F."/>
            <person name="Courtney L."/>
            <person name="Kalicki J."/>
            <person name="Ozersky P."/>
            <person name="Abbott S."/>
            <person name="Armstrong J."/>
            <person name="Belter E.A."/>
            <person name="Caruso L."/>
            <person name="Cedroni M."/>
            <person name="Cotton M."/>
            <person name="Davidson T."/>
            <person name="Desai A."/>
            <person name="Elliott G."/>
            <person name="Erb T."/>
            <person name="Fronick C."/>
            <person name="Gaige T."/>
            <person name="Haakenson W."/>
            <person name="Haglund K."/>
            <person name="Holmes A."/>
            <person name="Harkins R."/>
            <person name="Kim K."/>
            <person name="Kruchowski S.S."/>
            <person name="Strong C.M."/>
            <person name="Grewal N."/>
            <person name="Goyea E."/>
            <person name="Hou S."/>
            <person name="Levy A."/>
            <person name="Martinka S."/>
            <person name="Mead K."/>
            <person name="McLellan M.D."/>
            <person name="Meyer R."/>
            <person name="Randall-Maher J."/>
            <person name="Tomlinson C."/>
            <person name="Dauphin-Kohlberg S."/>
            <person name="Kozlowicz-Reilly A."/>
            <person name="Shah N."/>
            <person name="Swearengen-Shahid S."/>
            <person name="Snider J."/>
            <person name="Strong J.T."/>
            <person name="Thompson J."/>
            <person name="Yoakum M."/>
            <person name="Leonard S."/>
            <person name="Pearman C."/>
            <person name="Trani L."/>
            <person name="Radionenko M."/>
            <person name="Waligorski J.E."/>
            <person name="Wang C."/>
            <person name="Rock S.M."/>
            <person name="Tin-Wollam A.-M."/>
            <person name="Maupin R."/>
            <person name="Latreille P."/>
            <person name="Wendl M.C."/>
            <person name="Yang S.-P."/>
            <person name="Pohl C."/>
            <person name="Wallis J.W."/>
            <person name="Spieth J."/>
            <person name="Bieri T.A."/>
            <person name="Berkowicz N."/>
            <person name="Nelson J.O."/>
            <person name="Osborne J."/>
            <person name="Ding L."/>
            <person name="Meyer R."/>
            <person name="Sabo A."/>
            <person name="Shotland Y."/>
            <person name="Sinha P."/>
            <person name="Wohldmann P.E."/>
            <person name="Cook L.L."/>
            <person name="Hickenbotham M.T."/>
            <person name="Eldred J."/>
            <person name="Williams D."/>
            <person name="Jones T.A."/>
            <person name="She X."/>
            <person name="Ciccarelli F.D."/>
            <person name="Izaurralde E."/>
            <person name="Taylor J."/>
            <person name="Schmutz J."/>
            <person name="Myers R.M."/>
            <person name="Cox D.R."/>
            <person name="Huang X."/>
            <person name="McPherson J.D."/>
            <person name="Mardis E.R."/>
            <person name="Clifton S.W."/>
            <person name="Warren W.C."/>
            <person name="Chinwalla A.T."/>
            <person name="Eddy S.R."/>
            <person name="Marra M.A."/>
            <person name="Ovcharenko I."/>
            <person name="Furey T.S."/>
            <person name="Miller W."/>
            <person name="Eichler E.E."/>
            <person name="Bork P."/>
            <person name="Suyama M."/>
            <person name="Torrents D."/>
            <person name="Waterston R.H."/>
            <person name="Wilson R.K."/>
        </authorList>
    </citation>
    <scope>NUCLEOTIDE SEQUENCE [LARGE SCALE GENOMIC DNA]</scope>
</reference>
<reference key="4">
    <citation type="submission" date="2005-09" db="EMBL/GenBank/DDBJ databases">
        <authorList>
            <person name="Mural R.J."/>
            <person name="Istrail S."/>
            <person name="Sutton G.G."/>
            <person name="Florea L."/>
            <person name="Halpern A.L."/>
            <person name="Mobarry C.M."/>
            <person name="Lippert R."/>
            <person name="Walenz B."/>
            <person name="Shatkay H."/>
            <person name="Dew I."/>
            <person name="Miller J.R."/>
            <person name="Flanigan M.J."/>
            <person name="Edwards N.J."/>
            <person name="Bolanos R."/>
            <person name="Fasulo D."/>
            <person name="Halldorsson B.V."/>
            <person name="Hannenhalli S."/>
            <person name="Turner R."/>
            <person name="Yooseph S."/>
            <person name="Lu F."/>
            <person name="Nusskern D.R."/>
            <person name="Shue B.C."/>
            <person name="Zheng X.H."/>
            <person name="Zhong F."/>
            <person name="Delcher A.L."/>
            <person name="Huson D.H."/>
            <person name="Kravitz S.A."/>
            <person name="Mouchard L."/>
            <person name="Reinert K."/>
            <person name="Remington K.A."/>
            <person name="Clark A.G."/>
            <person name="Waterman M.S."/>
            <person name="Eichler E.E."/>
            <person name="Adams M.D."/>
            <person name="Hunkapiller M.W."/>
            <person name="Myers E.W."/>
            <person name="Venter J.C."/>
        </authorList>
    </citation>
    <scope>NUCLEOTIDE SEQUENCE [LARGE SCALE GENOMIC DNA]</scope>
</reference>
<reference key="5">
    <citation type="journal article" date="2004" name="Genome Res.">
        <title>The status, quality, and expansion of the NIH full-length cDNA project: the Mammalian Gene Collection (MGC).</title>
        <authorList>
            <consortium name="The MGC Project Team"/>
        </authorList>
    </citation>
    <scope>NUCLEOTIDE SEQUENCE [LARGE SCALE MRNA]</scope>
</reference>
<reference key="6">
    <citation type="journal article" date="2013" name="Diabetologia">
        <title>The novel chemokine receptor, G-protein-coupled receptor 75, is expressed by islets and is coupled to stimulation of insulin secretion and improved glucose homeostasis.</title>
        <authorList>
            <person name="Liu B."/>
            <person name="Hassan Z."/>
            <person name="Amisten S."/>
            <person name="King A.J."/>
            <person name="Bowe J.E."/>
            <person name="Huang G.C."/>
            <person name="Jones P.M."/>
            <person name="Persaud S.J."/>
        </authorList>
    </citation>
    <scope>FUNCTION</scope>
    <scope>TISSUE SPECIFICITY</scope>
</reference>
<reference key="7">
    <citation type="journal article" date="2001" name="Br. J. Ophthalmol.">
        <title>Evaluation of the G protein coupled receptor-75 (GPR75) in age related macular degeneration.</title>
        <authorList>
            <person name="Sauer C.G."/>
            <person name="White K."/>
            <person name="Stohr H."/>
            <person name="Grimm T."/>
            <person name="Hutchinson A."/>
            <person name="Bernstein P.S."/>
            <person name="Lewis R.A."/>
            <person name="Simonelli F."/>
            <person name="Pauleikhoff D."/>
            <person name="Allikmets R."/>
            <person name="Weber B.H."/>
        </authorList>
    </citation>
    <scope>VARIANTS LYS-78; LEU-99; THR-108; THR-116 AND PRO-135</scope>
    <scope>TISSUE SPECIFICITY</scope>
</reference>
<gene>
    <name type="primary">GPR75</name>
</gene>
<proteinExistence type="evidence at protein level"/>
<sequence length="540" mass="59359">MNSTGHLQDAPNATSLHVPHSQEGNSTSLQEGLQDLIHTATLVTCTFLLAVIFCLGSYGNFIVFLSFFDPAFRKFRTNFDFMILNLSFCDLFICGVTAPMFTFVLFFSSASSIPDAFCFTFHLTSSGFIIMSLKTVAVIALHRLRMVLGKQPNRTASFPCTVLLTLLLWATSFTLATLATLKTSKSHLCLPMSSLIAGKGKAILSLYVVDFTFCVAVVSVSYIMIAQTLRKNAQVRKCPPVITVDASRPQPFMGVPVQGGGDPIQCAMPALYRNQNYNKLQHVQTRGYTKSPNQLVTPAASRLQLVSAINLSTAKDSKAVVTCVIIVLSVLVCCLPLGISLVQVVLSSNGSFILYQFELFGFTLIFFKSGLNPFIYSRNSAGLRRKVLWCLQYIGLGFFCCKQKTRLRAMGKGNLEVNRNKSSHHETNSAYMLSPKPQKKFVDQACGPSHSKESMVSPKISAGHQHCGQSSSTPINTRIEPYYSIYNSSPSQEESSPCNLQPVNSFGFANSYIAMHYHTTNDLVQEYDSTSAKQIPVPSV</sequence>
<keyword id="KW-1003">Cell membrane</keyword>
<keyword id="KW-0297">G-protein coupled receptor</keyword>
<keyword id="KW-0325">Glycoprotein</keyword>
<keyword id="KW-0472">Membrane</keyword>
<keyword id="KW-1267">Proteomics identification</keyword>
<keyword id="KW-0675">Receptor</keyword>
<keyword id="KW-1185">Reference proteome</keyword>
<keyword id="KW-0807">Transducer</keyword>
<keyword id="KW-0812">Transmembrane</keyword>
<keyword id="KW-1133">Transmembrane helix</keyword>
<feature type="chain" id="PRO_0000069583" description="Probable G-protein coupled receptor 75">
    <location>
        <begin position="1"/>
        <end position="540"/>
    </location>
</feature>
<feature type="topological domain" description="Extracellular" evidence="2">
    <location>
        <begin position="1"/>
        <end position="46"/>
    </location>
</feature>
<feature type="transmembrane region" description="Helical; Name=1" evidence="2">
    <location>
        <begin position="47"/>
        <end position="67"/>
    </location>
</feature>
<feature type="topological domain" description="Cytoplasmic" evidence="2">
    <location>
        <begin position="68"/>
        <end position="86"/>
    </location>
</feature>
<feature type="transmembrane region" description="Helical; Name=2" evidence="2">
    <location>
        <begin position="87"/>
        <end position="107"/>
    </location>
</feature>
<feature type="topological domain" description="Extracellular" evidence="2">
    <location>
        <begin position="108"/>
        <end position="120"/>
    </location>
</feature>
<feature type="transmembrane region" description="Helical; Name=3" evidence="2">
    <location>
        <begin position="121"/>
        <end position="141"/>
    </location>
</feature>
<feature type="topological domain" description="Cytoplasmic" evidence="2">
    <location>
        <begin position="142"/>
        <end position="160"/>
    </location>
</feature>
<feature type="transmembrane region" description="Helical; Name=4" evidence="2">
    <location>
        <begin position="161"/>
        <end position="181"/>
    </location>
</feature>
<feature type="topological domain" description="Extracellular" evidence="2">
    <location>
        <begin position="182"/>
        <end position="205"/>
    </location>
</feature>
<feature type="transmembrane region" description="Helical; Name=5" evidence="2">
    <location>
        <begin position="206"/>
        <end position="226"/>
    </location>
</feature>
<feature type="topological domain" description="Cytoplasmic" evidence="2">
    <location>
        <begin position="227"/>
        <end position="318"/>
    </location>
</feature>
<feature type="transmembrane region" description="Helical; Name=6" evidence="2">
    <location>
        <begin position="319"/>
        <end position="339"/>
    </location>
</feature>
<feature type="topological domain" description="Extracellular" evidence="2">
    <location>
        <begin position="340"/>
        <end position="350"/>
    </location>
</feature>
<feature type="transmembrane region" description="Helical; Name=7" evidence="2">
    <location>
        <begin position="351"/>
        <end position="371"/>
    </location>
</feature>
<feature type="topological domain" description="Cytoplasmic" evidence="2">
    <location>
        <begin position="372"/>
        <end position="540"/>
    </location>
</feature>
<feature type="region of interest" description="Disordered" evidence="4">
    <location>
        <begin position="1"/>
        <end position="27"/>
    </location>
</feature>
<feature type="compositionally biased region" description="Polar residues" evidence="4">
    <location>
        <begin position="1"/>
        <end position="15"/>
    </location>
</feature>
<feature type="glycosylation site" description="N-linked (GlcNAc...) asparagine" evidence="2">
    <location>
        <position position="2"/>
    </location>
</feature>
<feature type="glycosylation site" description="N-linked (GlcNAc...) asparagine" evidence="2">
    <location>
        <position position="12"/>
    </location>
</feature>
<feature type="glycosylation site" description="N-linked (GlcNAc...) asparagine" evidence="2">
    <location>
        <position position="25"/>
    </location>
</feature>
<feature type="sequence variant" id="VAR_071258" description="Found in a patient with age-related macular degeneration; uncertain significance; dbSNP:rs72799238." evidence="6">
    <original>N</original>
    <variation>K</variation>
    <location>
        <position position="78"/>
    </location>
</feature>
<feature type="sequence variant" id="VAR_071259" description="Found in a patient with age-related macular degeneration; uncertain significance." evidence="6">
    <original>P</original>
    <variation>L</variation>
    <location>
        <position position="99"/>
    </location>
</feature>
<feature type="sequence variant" id="VAR_071260" description="Found in a patient with age-related macular degeneration; uncertain significance; dbSNP:rs763005023." evidence="6">
    <original>S</original>
    <variation>T</variation>
    <location>
        <position position="108"/>
    </location>
</feature>
<feature type="sequence variant" id="VAR_033471" description="In dbSNP:rs34000641." evidence="6">
    <original>A</original>
    <variation>T</variation>
    <location>
        <position position="116"/>
    </location>
</feature>
<feature type="sequence variant" id="VAR_071261" description="Found in a patient with age-related macular degeneration; uncertain significance." evidence="6">
    <original>T</original>
    <variation>P</variation>
    <location>
        <position position="135"/>
    </location>
</feature>
<feature type="sequence variant" id="VAR_033472" description="In dbSNP:rs35349235.">
    <original>C</original>
    <variation>G</variation>
    <location>
        <position position="160"/>
    </location>
</feature>
<feature type="sequence variant" id="VAR_033473" description="In dbSNP:rs3731969.">
    <original>L</original>
    <variation>V</variation>
    <location>
        <position position="433"/>
    </location>
</feature>
<feature type="sequence conflict" description="In Ref. 5; AAH67475." evidence="9" ref="5">
    <original>L</original>
    <variation>P</variation>
    <location>
        <position position="175"/>
    </location>
</feature>
<feature type="sequence conflict" description="In Ref. 5; AAH67475." evidence="9" ref="5">
    <original>N</original>
    <variation>D</variation>
    <location>
        <position position="278"/>
    </location>
</feature>
<dbReference type="EMBL" id="AF072693">
    <property type="protein sequence ID" value="AAD19849.1"/>
    <property type="molecule type" value="mRNA"/>
</dbReference>
<dbReference type="EMBL" id="AF101472">
    <property type="protein sequence ID" value="AAD22770.1"/>
    <property type="molecule type" value="Genomic_DNA"/>
</dbReference>
<dbReference type="EMBL" id="AK314885">
    <property type="protein sequence ID" value="BAG37399.1"/>
    <property type="molecule type" value="mRNA"/>
</dbReference>
<dbReference type="EMBL" id="AC008068">
    <property type="protein sequence ID" value="AAY15018.1"/>
    <property type="molecule type" value="Genomic_DNA"/>
</dbReference>
<dbReference type="EMBL" id="CH471053">
    <property type="protein sequence ID" value="EAX00162.1"/>
    <property type="molecule type" value="Genomic_DNA"/>
</dbReference>
<dbReference type="EMBL" id="BC067475">
    <property type="protein sequence ID" value="AAH67475.1"/>
    <property type="molecule type" value="mRNA"/>
</dbReference>
<dbReference type="EMBL" id="BC067476">
    <property type="protein sequence ID" value="AAH67476.1"/>
    <property type="molecule type" value="mRNA"/>
</dbReference>
<dbReference type="CCDS" id="CCDS1849.1"/>
<dbReference type="RefSeq" id="NP_006785.1">
    <property type="nucleotide sequence ID" value="NM_006794.4"/>
</dbReference>
<dbReference type="SMR" id="O95800"/>
<dbReference type="FunCoup" id="O95800">
    <property type="interactions" value="283"/>
</dbReference>
<dbReference type="STRING" id="9606.ENSP00000378195"/>
<dbReference type="ChEMBL" id="CHEMBL4523861"/>
<dbReference type="GuidetoPHARMACOLOGY" id="115"/>
<dbReference type="GlyCosmos" id="O95800">
    <property type="glycosylation" value="3 sites, No reported glycans"/>
</dbReference>
<dbReference type="GlyGen" id="O95800">
    <property type="glycosylation" value="3 sites"/>
</dbReference>
<dbReference type="iPTMnet" id="O95800"/>
<dbReference type="PhosphoSitePlus" id="O95800"/>
<dbReference type="BioMuta" id="GPR75"/>
<dbReference type="PaxDb" id="9606-ENSP00000378195"/>
<dbReference type="PeptideAtlas" id="O95800"/>
<dbReference type="Antibodypedia" id="15401">
    <property type="antibodies" value="418 antibodies from 33 providers"/>
</dbReference>
<dbReference type="DNASU" id="10936"/>
<dbReference type="Ensembl" id="ENST00000394705.3">
    <property type="protein sequence ID" value="ENSP00000378195.2"/>
    <property type="gene ID" value="ENSG00000119737.6"/>
</dbReference>
<dbReference type="GeneID" id="10936"/>
<dbReference type="KEGG" id="hsa:10936"/>
<dbReference type="MANE-Select" id="ENST00000394705.3">
    <property type="protein sequence ID" value="ENSP00000378195.2"/>
    <property type="RefSeq nucleotide sequence ID" value="NM_006794.4"/>
    <property type="RefSeq protein sequence ID" value="NP_006785.1"/>
</dbReference>
<dbReference type="UCSC" id="uc002rxo.4">
    <property type="organism name" value="human"/>
</dbReference>
<dbReference type="AGR" id="HGNC:4526"/>
<dbReference type="CTD" id="10936"/>
<dbReference type="DisGeNET" id="10936"/>
<dbReference type="GeneCards" id="GPR75"/>
<dbReference type="HGNC" id="HGNC:4526">
    <property type="gene designation" value="GPR75"/>
</dbReference>
<dbReference type="HPA" id="ENSG00000119737">
    <property type="expression patterns" value="Tissue enhanced (brain, retina)"/>
</dbReference>
<dbReference type="MIM" id="606704">
    <property type="type" value="gene"/>
</dbReference>
<dbReference type="neXtProt" id="NX_O95800"/>
<dbReference type="OpenTargets" id="ENSG00000119737"/>
<dbReference type="PharmGKB" id="PA28919"/>
<dbReference type="VEuPathDB" id="HostDB:ENSG00000119737"/>
<dbReference type="eggNOG" id="ENOG502QVED">
    <property type="taxonomic scope" value="Eukaryota"/>
</dbReference>
<dbReference type="GeneTree" id="ENSGT00390000007723"/>
<dbReference type="HOGENOM" id="CLU_041999_0_0_1"/>
<dbReference type="InParanoid" id="O95800"/>
<dbReference type="OMA" id="PFMGAPV"/>
<dbReference type="OrthoDB" id="8732677at2759"/>
<dbReference type="PAN-GO" id="O95800">
    <property type="GO annotations" value="3 GO annotations based on evolutionary models"/>
</dbReference>
<dbReference type="PhylomeDB" id="O95800"/>
<dbReference type="TreeFam" id="TF331523"/>
<dbReference type="PathwayCommons" id="O95800"/>
<dbReference type="BioGRID-ORCS" id="10936">
    <property type="hits" value="12 hits in 1146 CRISPR screens"/>
</dbReference>
<dbReference type="GeneWiki" id="GPR75"/>
<dbReference type="GenomeRNAi" id="10936"/>
<dbReference type="Pharos" id="O95800">
    <property type="development level" value="Tbio"/>
</dbReference>
<dbReference type="PRO" id="PR:O95800"/>
<dbReference type="Proteomes" id="UP000005640">
    <property type="component" value="Chromosome 2"/>
</dbReference>
<dbReference type="RNAct" id="O95800">
    <property type="molecule type" value="protein"/>
</dbReference>
<dbReference type="Bgee" id="ENSG00000119737">
    <property type="expression patterns" value="Expressed in male germ line stem cell (sensu Vertebrata) in testis and 98 other cell types or tissues"/>
</dbReference>
<dbReference type="GO" id="GO:0005886">
    <property type="term" value="C:plasma membrane"/>
    <property type="evidence" value="ECO:0000318"/>
    <property type="project" value="GO_Central"/>
</dbReference>
<dbReference type="GO" id="GO:0016493">
    <property type="term" value="F:C-C chemokine receptor activity"/>
    <property type="evidence" value="ECO:0000250"/>
    <property type="project" value="UniProtKB"/>
</dbReference>
<dbReference type="GO" id="GO:0004930">
    <property type="term" value="F:G protein-coupled receptor activity"/>
    <property type="evidence" value="ECO:0000250"/>
    <property type="project" value="UniProtKB"/>
</dbReference>
<dbReference type="GO" id="GO:0070098">
    <property type="term" value="P:chemokine-mediated signaling pathway"/>
    <property type="evidence" value="ECO:0000250"/>
    <property type="project" value="UniProtKB"/>
</dbReference>
<dbReference type="GO" id="GO:0007186">
    <property type="term" value="P:G protein-coupled receptor signaling pathway"/>
    <property type="evidence" value="ECO:0000250"/>
    <property type="project" value="UniProtKB"/>
</dbReference>
<dbReference type="CDD" id="cd15007">
    <property type="entry name" value="7tmA_GPR75"/>
    <property type="match status" value="1"/>
</dbReference>
<dbReference type="Gene3D" id="1.20.1070.10">
    <property type="entry name" value="Rhodopsin 7-helix transmembrane proteins"/>
    <property type="match status" value="1"/>
</dbReference>
<dbReference type="InterPro" id="IPR000276">
    <property type="entry name" value="GPCR_Rhodpsn"/>
</dbReference>
<dbReference type="InterPro" id="IPR017452">
    <property type="entry name" value="GPCR_Rhodpsn_7TM"/>
</dbReference>
<dbReference type="PANTHER" id="PTHR24228">
    <property type="entry name" value="B2 BRADYKININ RECEPTOR/ANGIOTENSIN II RECEPTOR"/>
    <property type="match status" value="1"/>
</dbReference>
<dbReference type="PANTHER" id="PTHR24228:SF55">
    <property type="entry name" value="G-PROTEIN COUPLED RECEPTOR 75-RELATED"/>
    <property type="match status" value="1"/>
</dbReference>
<dbReference type="Pfam" id="PF00001">
    <property type="entry name" value="7tm_1"/>
    <property type="match status" value="1"/>
</dbReference>
<dbReference type="PRINTS" id="PR00237">
    <property type="entry name" value="GPCRRHODOPSN"/>
</dbReference>
<dbReference type="SUPFAM" id="SSF81321">
    <property type="entry name" value="Family A G protein-coupled receptor-like"/>
    <property type="match status" value="1"/>
</dbReference>
<dbReference type="PROSITE" id="PS50262">
    <property type="entry name" value="G_PROTEIN_RECEP_F1_2"/>
    <property type="match status" value="1"/>
</dbReference>